<gene>
    <name evidence="1" type="primary">rpoA</name>
</gene>
<accession>Q9TLV2</accession>
<comment type="function">
    <text evidence="1">DNA-dependent RNA polymerase catalyzes the transcription of DNA into RNA using the four ribonucleoside triphosphates as substrates.</text>
</comment>
<comment type="catalytic activity">
    <reaction evidence="1">
        <text>RNA(n) + a ribonucleoside 5'-triphosphate = RNA(n+1) + diphosphate</text>
        <dbReference type="Rhea" id="RHEA:21248"/>
        <dbReference type="Rhea" id="RHEA-COMP:14527"/>
        <dbReference type="Rhea" id="RHEA-COMP:17342"/>
        <dbReference type="ChEBI" id="CHEBI:33019"/>
        <dbReference type="ChEBI" id="CHEBI:61557"/>
        <dbReference type="ChEBI" id="CHEBI:140395"/>
        <dbReference type="EC" id="2.7.7.6"/>
    </reaction>
</comment>
<comment type="subunit">
    <text evidence="1">In plastids the minimal PEP RNA polymerase catalytic core is composed of four subunits: alpha, beta, beta', and beta''. When a (nuclear-encoded) sigma factor is associated with the core the holoenzyme is formed, which can initiate transcription.</text>
</comment>
<comment type="subcellular location">
    <subcellularLocation>
        <location>Plastid</location>
        <location>Chloroplast</location>
    </subcellularLocation>
</comment>
<comment type="domain">
    <text evidence="1">The N-terminal domain is essential for RNAP assembly and basal transcription, whereas the C-terminal domain is involved in interaction with transcriptional regulators and with upstream promoter elements.</text>
</comment>
<comment type="similarity">
    <text evidence="1">Belongs to the RNA polymerase alpha chain family.</text>
</comment>
<sequence length="310" mass="34748">MLGKVNGVQIECLESMVINSREIYGKFMIEPLSYGQAITVGNALRRVLLSDVPGVTIVSVRIAGINHEFSTVKGVKEDVLEILLNLKNIVLKGNVLKNQIGRLKVQGPAIVTSGQIEFPLDITVVDPCQYIATISGNDYLEMELKVEKSSGYKLVETFSKKSPLDFLPIDSIFMPVKKVNYYVEEILDSKVAYEKLILELWTNGSLSPQQSINYASDNLVKLFNPLRVLDFSKESSSVYEQNSLIKQKLIEELCLSVRAYNCLKRVQVDSIGDLLEYSIGDLLEIKNFGQKSVEEVSKALYKKFGVKLKH</sequence>
<dbReference type="EC" id="2.7.7.6" evidence="1"/>
<dbReference type="EMBL" id="AF022186">
    <property type="protein sequence ID" value="AAF12928.1"/>
    <property type="molecule type" value="Genomic_DNA"/>
</dbReference>
<dbReference type="RefSeq" id="NP_045166.1">
    <property type="nucleotide sequence ID" value="NC_001840.1"/>
</dbReference>
<dbReference type="SMR" id="Q9TLV2"/>
<dbReference type="GeneID" id="800197"/>
<dbReference type="GO" id="GO:0009507">
    <property type="term" value="C:chloroplast"/>
    <property type="evidence" value="ECO:0007669"/>
    <property type="project" value="UniProtKB-SubCell"/>
</dbReference>
<dbReference type="GO" id="GO:0000428">
    <property type="term" value="C:DNA-directed RNA polymerase complex"/>
    <property type="evidence" value="ECO:0007669"/>
    <property type="project" value="UniProtKB-KW"/>
</dbReference>
<dbReference type="GO" id="GO:0005739">
    <property type="term" value="C:mitochondrion"/>
    <property type="evidence" value="ECO:0007669"/>
    <property type="project" value="GOC"/>
</dbReference>
<dbReference type="GO" id="GO:0003677">
    <property type="term" value="F:DNA binding"/>
    <property type="evidence" value="ECO:0007669"/>
    <property type="project" value="UniProtKB-UniRule"/>
</dbReference>
<dbReference type="GO" id="GO:0003899">
    <property type="term" value="F:DNA-directed RNA polymerase activity"/>
    <property type="evidence" value="ECO:0007669"/>
    <property type="project" value="UniProtKB-UniRule"/>
</dbReference>
<dbReference type="GO" id="GO:0046983">
    <property type="term" value="F:protein dimerization activity"/>
    <property type="evidence" value="ECO:0007669"/>
    <property type="project" value="InterPro"/>
</dbReference>
<dbReference type="GO" id="GO:0006351">
    <property type="term" value="P:DNA-templated transcription"/>
    <property type="evidence" value="ECO:0007669"/>
    <property type="project" value="UniProtKB-UniRule"/>
</dbReference>
<dbReference type="CDD" id="cd06928">
    <property type="entry name" value="RNAP_alpha_NTD"/>
    <property type="match status" value="1"/>
</dbReference>
<dbReference type="FunFam" id="2.170.120.12:FF:000001">
    <property type="entry name" value="DNA-directed RNA polymerase subunit alpha"/>
    <property type="match status" value="1"/>
</dbReference>
<dbReference type="Gene3D" id="1.10.150.20">
    <property type="entry name" value="5' to 3' exonuclease, C-terminal subdomain"/>
    <property type="match status" value="1"/>
</dbReference>
<dbReference type="Gene3D" id="2.170.120.12">
    <property type="entry name" value="DNA-directed RNA polymerase, insert domain"/>
    <property type="match status" value="1"/>
</dbReference>
<dbReference type="Gene3D" id="3.30.1360.10">
    <property type="entry name" value="RNA polymerase, RBP11-like subunit"/>
    <property type="match status" value="1"/>
</dbReference>
<dbReference type="HAMAP" id="MF_00059">
    <property type="entry name" value="RNApol_bact_RpoA"/>
    <property type="match status" value="1"/>
</dbReference>
<dbReference type="InterPro" id="IPR011262">
    <property type="entry name" value="DNA-dir_RNA_pol_insert"/>
</dbReference>
<dbReference type="InterPro" id="IPR011263">
    <property type="entry name" value="DNA-dir_RNA_pol_RpoA/D/Rpb3"/>
</dbReference>
<dbReference type="InterPro" id="IPR011773">
    <property type="entry name" value="DNA-dir_RpoA"/>
</dbReference>
<dbReference type="InterPro" id="IPR036603">
    <property type="entry name" value="RBP11-like"/>
</dbReference>
<dbReference type="InterPro" id="IPR011260">
    <property type="entry name" value="RNAP_asu_C"/>
</dbReference>
<dbReference type="InterPro" id="IPR036643">
    <property type="entry name" value="RNApol_insert_sf"/>
</dbReference>
<dbReference type="NCBIfam" id="NF003516">
    <property type="entry name" value="PRK05182.2-2"/>
    <property type="match status" value="1"/>
</dbReference>
<dbReference type="NCBIfam" id="NF003519">
    <property type="entry name" value="PRK05182.2-5"/>
    <property type="match status" value="1"/>
</dbReference>
<dbReference type="NCBIfam" id="TIGR02027">
    <property type="entry name" value="rpoA"/>
    <property type="match status" value="1"/>
</dbReference>
<dbReference type="Pfam" id="PF01000">
    <property type="entry name" value="RNA_pol_A_bac"/>
    <property type="match status" value="1"/>
</dbReference>
<dbReference type="Pfam" id="PF03118">
    <property type="entry name" value="RNA_pol_A_CTD"/>
    <property type="match status" value="1"/>
</dbReference>
<dbReference type="Pfam" id="PF01193">
    <property type="entry name" value="RNA_pol_L"/>
    <property type="match status" value="1"/>
</dbReference>
<dbReference type="SMART" id="SM00662">
    <property type="entry name" value="RPOLD"/>
    <property type="match status" value="1"/>
</dbReference>
<dbReference type="SUPFAM" id="SSF47789">
    <property type="entry name" value="C-terminal domain of RNA polymerase alpha subunit"/>
    <property type="match status" value="1"/>
</dbReference>
<dbReference type="SUPFAM" id="SSF56553">
    <property type="entry name" value="Insert subdomain of RNA polymerase alpha subunit"/>
    <property type="match status" value="1"/>
</dbReference>
<dbReference type="SUPFAM" id="SSF55257">
    <property type="entry name" value="RBP11-like subunits of RNA polymerase"/>
    <property type="match status" value="1"/>
</dbReference>
<geneLocation type="chloroplast"/>
<name>RPOA_CYACA</name>
<protein>
    <recommendedName>
        <fullName evidence="1">DNA-directed RNA polymerase subunit alpha</fullName>
        <shortName evidence="1">PEP</shortName>
        <ecNumber evidence="1">2.7.7.6</ecNumber>
    </recommendedName>
    <alternativeName>
        <fullName evidence="1">Plastid-encoded RNA polymerase subunit alpha</fullName>
        <shortName evidence="1">RNA polymerase subunit alpha</shortName>
    </alternativeName>
</protein>
<proteinExistence type="inferred from homology"/>
<organism>
    <name type="scientific">Cyanidium caldarium</name>
    <name type="common">Red alga</name>
    <dbReference type="NCBI Taxonomy" id="2771"/>
    <lineage>
        <taxon>Eukaryota</taxon>
        <taxon>Rhodophyta</taxon>
        <taxon>Bangiophyceae</taxon>
        <taxon>Cyanidiales</taxon>
        <taxon>Cyanidiaceae</taxon>
        <taxon>Cyanidium</taxon>
    </lineage>
</organism>
<evidence type="ECO:0000255" key="1">
    <source>
        <dbReference type="HAMAP-Rule" id="MF_00059"/>
    </source>
</evidence>
<feature type="chain" id="PRO_0000175450" description="DNA-directed RNA polymerase subunit alpha">
    <location>
        <begin position="1"/>
        <end position="310"/>
    </location>
</feature>
<feature type="region of interest" description="Alpha N-terminal domain (alpha-NTD)" evidence="1">
    <location>
        <begin position="1"/>
        <end position="230"/>
    </location>
</feature>
<feature type="region of interest" description="Alpha C-terminal domain (alpha-CTD)" evidence="1">
    <location>
        <begin position="242"/>
        <end position="310"/>
    </location>
</feature>
<reference key="1">
    <citation type="journal article" date="2000" name="J. Mol. Evol.">
        <title>The structure and gene repertoire of an ancient red algal plastid genome.</title>
        <authorList>
            <person name="Gloeckner G."/>
            <person name="Rosenthal A."/>
            <person name="Valentin K.-U."/>
        </authorList>
    </citation>
    <scope>NUCLEOTIDE SEQUENCE [LARGE SCALE GENOMIC DNA]</scope>
    <source>
        <strain>RK-1</strain>
    </source>
</reference>
<keyword id="KW-0150">Chloroplast</keyword>
<keyword id="KW-0240">DNA-directed RNA polymerase</keyword>
<keyword id="KW-0548">Nucleotidyltransferase</keyword>
<keyword id="KW-0934">Plastid</keyword>
<keyword id="KW-0804">Transcription</keyword>
<keyword id="KW-0808">Transferase</keyword>